<sequence length="356" mass="40160">MADAAVIEKLEAGFKKLEAATDCKSLLKKYLTKEVFDKLKDKRTSLGATLLDVIQSGVENLDSGVGIYAPDAEAYTLFAPLFDPIIEDYHVGFKQTDKHPNKDFGDVNSFVNVDPEGKFVISTRVRCGRSLQGYPFNPCLTESQYKEMEAKVSSTLSSLEGELKGTYYPLTGMSKEVQQKLIDDHFLFKEGDRFLQAANACRYWPAGRGIYHNDNKTFLVWVNEEDHLRIISMQMGGDLGQVFRRLTSAVNEIEKRIPFSHHDRLGFLTFCPTNLGTTVRASVHIKLPKLAANREKLEEVAGKYNLQVRGTRGEHTEAEGGIYDISNKRRMGLTEFQAVKEMQDGILELIKIEKEM</sequence>
<evidence type="ECO:0000255" key="1">
    <source>
        <dbReference type="PROSITE-ProRule" id="PRU00842"/>
    </source>
</evidence>
<evidence type="ECO:0000255" key="2">
    <source>
        <dbReference type="PROSITE-ProRule" id="PRU00843"/>
    </source>
</evidence>
<evidence type="ECO:0000255" key="3">
    <source>
        <dbReference type="RuleBase" id="RU000505"/>
    </source>
</evidence>
<evidence type="ECO:0000269" key="4">
    <source>
    </source>
</evidence>
<evidence type="ECO:0000269" key="5">
    <source>
    </source>
</evidence>
<evidence type="ECO:0000269" key="6">
    <source>
    </source>
</evidence>
<evidence type="ECO:0000269" key="7">
    <source>
    </source>
</evidence>
<evidence type="ECO:0000303" key="8">
    <source>
    </source>
</evidence>
<evidence type="ECO:0000303" key="9">
    <source>
    </source>
</evidence>
<evidence type="ECO:0000303" key="10">
    <source>
    </source>
</evidence>
<evidence type="ECO:0000303" key="11">
    <source>
    </source>
</evidence>
<evidence type="ECO:0000305" key="12"/>
<evidence type="ECO:0000305" key="13">
    <source>
    </source>
</evidence>
<evidence type="ECO:0000305" key="14">
    <source>
    </source>
</evidence>
<evidence type="ECO:0000305" key="15">
    <source>
    </source>
</evidence>
<evidence type="ECO:0000305" key="16">
    <source>
    </source>
</evidence>
<evidence type="ECO:0000312" key="17">
    <source>
        <dbReference type="EMBL" id="ABI98020.1"/>
    </source>
</evidence>
<evidence type="ECO:0007744" key="18">
    <source>
        <dbReference type="PDB" id="4AM1"/>
    </source>
</evidence>
<evidence type="ECO:0007744" key="19">
    <source>
        <dbReference type="PDB" id="4BG4"/>
    </source>
</evidence>
<evidence type="ECO:0007744" key="20">
    <source>
        <dbReference type="PDB" id="4BHL"/>
    </source>
</evidence>
<evidence type="ECO:0007829" key="21">
    <source>
        <dbReference type="PDB" id="4AM1"/>
    </source>
</evidence>
<evidence type="ECO:0007829" key="22">
    <source>
        <dbReference type="PDB" id="4BG4"/>
    </source>
</evidence>
<reference evidence="17" key="1">
    <citation type="journal article" date="2007" name="Int. Arch. Allergy Immunol.">
        <title>Molecular characterization of arginine kinase, an allergen from the shrimp Litopenaeus vannamei.</title>
        <authorList>
            <person name="Garcia-Orozco K.D."/>
            <person name="Aispuro-Hernandez E."/>
            <person name="Yepiz-Plascencia G."/>
            <person name="Calderon-de-la-Barca A.M."/>
            <person name="Sotelo-Mundo R.R."/>
        </authorList>
    </citation>
    <scope>NUCLEOTIDE SEQUENCE [MRNA]</scope>
    <scope>PROTEIN SEQUENCE OF 2-15; 310-328; 316-329 AND 331-340</scope>
    <scope>IDENTIFICATION BY MASS SPECTROMETRY</scope>
    <scope>FUNCTION</scope>
    <scope>CATALYTIC ACTIVITY</scope>
    <scope>TISSUE SPECIFICITY</scope>
    <scope>ALLERGEN</scope>
    <source>
        <tissue evidence="8 17">Muscle</tissue>
    </source>
</reference>
<reference key="2">
    <citation type="journal article" date="2016" name="J. Bioenerg. Biomembr.">
        <title>Arginine kinase shows nucleoside diphosphate kinase-like activity toward deoxythymidine diphosphate.</title>
        <authorList>
            <person name="Lopez-Zavala A.A."/>
            <person name="Sotelo-Mundo R.R."/>
            <person name="Hernandez-Flores J.M."/>
            <person name="Lugo-Sanchez M.E."/>
            <person name="Sugich-Miranda R."/>
            <person name="Garcia-Orozco K.D."/>
        </authorList>
    </citation>
    <scope>FUNCTION</scope>
    <scope>CATALYTIC ACTIVITY</scope>
    <scope>BIOPHYSICOCHEMICAL PROPERTIES</scope>
    <scope>SUBSTRATE SPECIFICITY</scope>
    <scope>TISSUE SPECIFICITY</scope>
</reference>
<reference evidence="18" key="3">
    <citation type="journal article" date="2012" name="Acta Crystallogr. F Struct. Biol. Commun.">
        <title>Crystallization and X-ray diffraction studies of arginine kinase from the white Pacific shrimp Litopenaeus vannamei.</title>
        <authorList>
            <person name="Lopez-Zavala A.A."/>
            <person name="Sotelo-Mundo R.R."/>
            <person name="Garcia-Orozco K.D."/>
            <person name="Isac-Martinez F."/>
            <person name="Brieba L.G."/>
            <person name="Rudino-Pinera E."/>
        </authorList>
    </citation>
    <scope>X-RAY CRYSTALLOGRAPHY (1.25 ANGSTROMS) OF 2-356</scope>
    <scope>FUNCTION</scope>
    <scope>CATALYTIC ACTIVITY</scope>
    <scope>SUBUNIT</scope>
    <scope>TISSUE SPECIFICITY</scope>
</reference>
<reference evidence="19 20" key="4">
    <citation type="journal article" date="2013" name="J. Bioenerg. Biomembr.">
        <title>Crystal structure of shrimp arginine kinase in binary complex with arginine-a molecular view of the phosphagen precursor binding to the enzyme.</title>
        <authorList>
            <person name="Lopez-Zavala A.A."/>
            <person name="Garcia-Orozco K.D."/>
            <person name="Carrasco-Miranda J.S."/>
            <person name="Sugich-Miranda R."/>
            <person name="Velazquez-Contreras E.F."/>
            <person name="Criscitiello M.F."/>
            <person name="Brieba L.G."/>
            <person name="Rudino-Pinera E."/>
            <person name="Sotelo-Mundo R.R."/>
        </authorList>
    </citation>
    <scope>X-RAY CRYSTALLOGRAPHY (1.60 ANGSTROMS) IN COMPLEX WITH ADP AND ARGININE</scope>
    <scope>FUNCTION</scope>
    <scope>CATALYTIC ACTIVITY</scope>
    <scope>TISSUE SPECIFICITY</scope>
</reference>
<protein>
    <recommendedName>
        <fullName evidence="12">Arginine kinase Lit v 2.0101</fullName>
        <ecNumber evidence="4 5 6 7">2.7.3.3</ecNumber>
    </recommendedName>
    <alternativeName>
        <fullName evidence="8">Allergen Lit v 2</fullName>
    </alternativeName>
    <alternativeName>
        <fullName evidence="8 9 10 11 17">Arginine kinase</fullName>
        <shortName evidence="8 9 10 11">AK</shortName>
    </alternativeName>
    <alternativeName>
        <fullName evidence="9 10 11">LvAK</fullName>
    </alternativeName>
    <allergenName evidence="12">Lit v 2.0101</allergenName>
</protein>
<organism>
    <name type="scientific">Penaeus vannamei</name>
    <name type="common">Whiteleg shrimp</name>
    <name type="synonym">Litopenaeus vannamei</name>
    <dbReference type="NCBI Taxonomy" id="6689"/>
    <lineage>
        <taxon>Eukaryota</taxon>
        <taxon>Metazoa</taxon>
        <taxon>Ecdysozoa</taxon>
        <taxon>Arthropoda</taxon>
        <taxon>Crustacea</taxon>
        <taxon>Multicrustacea</taxon>
        <taxon>Malacostraca</taxon>
        <taxon>Eumalacostraca</taxon>
        <taxon>Eucarida</taxon>
        <taxon>Decapoda</taxon>
        <taxon>Dendrobranchiata</taxon>
        <taxon>Penaeoidea</taxon>
        <taxon>Penaeidae</taxon>
        <taxon>Penaeus</taxon>
    </lineage>
</organism>
<proteinExistence type="evidence at protein level"/>
<feature type="initiator methionine" description="Removed" evidence="4">
    <location>
        <position position="1"/>
    </location>
</feature>
<feature type="chain" id="PRO_0000447429" description="Arginine kinase Lit v 2.0101" evidence="13">
    <location>
        <begin position="2"/>
        <end position="356"/>
    </location>
</feature>
<feature type="domain" description="Phosphagen kinase N-terminal" evidence="1">
    <location>
        <begin position="9"/>
        <end position="91"/>
    </location>
</feature>
<feature type="domain" description="Phosphagen kinase C-terminal" evidence="2">
    <location>
        <begin position="119"/>
        <end position="356"/>
    </location>
</feature>
<feature type="binding site" evidence="6 19 20">
    <location>
        <begin position="64"/>
        <end position="68"/>
    </location>
    <ligand>
        <name>L-arginine</name>
        <dbReference type="ChEBI" id="CHEBI:32682"/>
    </ligand>
</feature>
<feature type="binding site" evidence="2 6 19">
    <location>
        <begin position="122"/>
        <end position="126"/>
    </location>
    <ligand>
        <name>ATP</name>
        <dbReference type="ChEBI" id="CHEBI:30616"/>
    </ligand>
</feature>
<feature type="binding site" evidence="2 6 19">
    <location>
        <position position="185"/>
    </location>
    <ligand>
        <name>ATP</name>
        <dbReference type="ChEBI" id="CHEBI:30616"/>
    </ligand>
</feature>
<feature type="binding site" evidence="6 19 20">
    <location>
        <position position="225"/>
    </location>
    <ligand>
        <name>L-arginine</name>
        <dbReference type="ChEBI" id="CHEBI:32682"/>
    </ligand>
</feature>
<feature type="binding site" evidence="2 6 19">
    <location>
        <position position="229"/>
    </location>
    <ligand>
        <name>ATP</name>
        <dbReference type="ChEBI" id="CHEBI:30616"/>
    </ligand>
</feature>
<feature type="binding site" evidence="6 19">
    <location>
        <position position="271"/>
    </location>
    <ligand>
        <name>L-arginine</name>
        <dbReference type="ChEBI" id="CHEBI:32682"/>
    </ligand>
</feature>
<feature type="binding site" evidence="2 6 19">
    <location>
        <begin position="280"/>
        <end position="284"/>
    </location>
    <ligand>
        <name>ATP</name>
        <dbReference type="ChEBI" id="CHEBI:30616"/>
    </ligand>
</feature>
<feature type="binding site" evidence="2 6 19">
    <location>
        <begin position="309"/>
        <end position="314"/>
    </location>
    <ligand>
        <name>ATP</name>
        <dbReference type="ChEBI" id="CHEBI:30616"/>
    </ligand>
</feature>
<feature type="binding site" evidence="6 19">
    <location>
        <position position="314"/>
    </location>
    <ligand>
        <name>L-arginine</name>
        <dbReference type="ChEBI" id="CHEBI:32682"/>
    </ligand>
</feature>
<feature type="helix" evidence="21">
    <location>
        <begin position="4"/>
        <end position="19"/>
    </location>
</feature>
<feature type="helix" evidence="21">
    <location>
        <begin position="26"/>
        <end position="30"/>
    </location>
</feature>
<feature type="helix" evidence="21">
    <location>
        <begin position="33"/>
        <end position="39"/>
    </location>
</feature>
<feature type="helix" evidence="21">
    <location>
        <begin position="51"/>
        <end position="59"/>
    </location>
</feature>
<feature type="strand" evidence="21">
    <location>
        <begin position="70"/>
        <end position="72"/>
    </location>
</feature>
<feature type="helix" evidence="21">
    <location>
        <begin position="73"/>
        <end position="77"/>
    </location>
</feature>
<feature type="helix" evidence="21">
    <location>
        <begin position="79"/>
        <end position="89"/>
    </location>
</feature>
<feature type="turn" evidence="22">
    <location>
        <begin position="90"/>
        <end position="92"/>
    </location>
</feature>
<feature type="helix" evidence="22">
    <location>
        <begin position="107"/>
        <end position="109"/>
    </location>
</feature>
<feature type="strand" evidence="21">
    <location>
        <begin position="118"/>
        <end position="129"/>
    </location>
</feature>
<feature type="helix" evidence="21">
    <location>
        <begin position="137"/>
        <end position="139"/>
    </location>
</feature>
<feature type="helix" evidence="21">
    <location>
        <begin position="142"/>
        <end position="157"/>
    </location>
</feature>
<feature type="helix" evidence="21">
    <location>
        <begin position="161"/>
        <end position="163"/>
    </location>
</feature>
<feature type="strand" evidence="21">
    <location>
        <begin position="165"/>
        <end position="170"/>
    </location>
</feature>
<feature type="helix" evidence="21">
    <location>
        <begin position="175"/>
        <end position="183"/>
    </location>
</feature>
<feature type="helix" evidence="21">
    <location>
        <begin position="193"/>
        <end position="197"/>
    </location>
</feature>
<feature type="turn" evidence="21">
    <location>
        <begin position="202"/>
        <end position="207"/>
    </location>
</feature>
<feature type="strand" evidence="21">
    <location>
        <begin position="209"/>
        <end position="213"/>
    </location>
</feature>
<feature type="strand" evidence="21">
    <location>
        <begin position="218"/>
        <end position="238"/>
    </location>
</feature>
<feature type="helix" evidence="21">
    <location>
        <begin position="239"/>
        <end position="256"/>
    </location>
</feature>
<feature type="turn" evidence="21">
    <location>
        <begin position="263"/>
        <end position="265"/>
    </location>
</feature>
<feature type="helix" evidence="21">
    <location>
        <begin position="272"/>
        <end position="274"/>
    </location>
</feature>
<feature type="strand" evidence="21">
    <location>
        <begin position="280"/>
        <end position="286"/>
    </location>
</feature>
<feature type="turn" evidence="21">
    <location>
        <begin position="288"/>
        <end position="290"/>
    </location>
</feature>
<feature type="strand" evidence="21">
    <location>
        <begin position="291"/>
        <end position="293"/>
    </location>
</feature>
<feature type="helix" evidence="21">
    <location>
        <begin position="294"/>
        <end position="303"/>
    </location>
</feature>
<feature type="strand" evidence="21">
    <location>
        <begin position="306"/>
        <end position="309"/>
    </location>
</feature>
<feature type="strand" evidence="21">
    <location>
        <begin position="322"/>
        <end position="327"/>
    </location>
</feature>
<feature type="strand" evidence="21">
    <location>
        <begin position="331"/>
        <end position="333"/>
    </location>
</feature>
<feature type="helix" evidence="21">
    <location>
        <begin position="335"/>
        <end position="354"/>
    </location>
</feature>
<comment type="function">
    <text evidence="4 5 6 7">Catalyzes the reversible transfer of high energy ATP gamma-phosphate group to L-arginine (PubMed:17496423, PubMed:22750864, PubMed:23873077, PubMed:27072556). Has nucleoside diphosphate kinase-like activity toward dTDP. Binds and phosphorylates dTDP using ATP as a phosphate donor. Does not phosphorylate dADP, dCDP, dGDP, dTMP or thymidine (PubMed:27072556).</text>
</comment>
<comment type="catalytic activity">
    <reaction evidence="4 5 6 7">
        <text>L-arginine + ATP = N(omega)-phospho-L-arginine + ADP + H(+)</text>
        <dbReference type="Rhea" id="RHEA:22940"/>
        <dbReference type="ChEBI" id="CHEBI:15378"/>
        <dbReference type="ChEBI" id="CHEBI:30616"/>
        <dbReference type="ChEBI" id="CHEBI:32682"/>
        <dbReference type="ChEBI" id="CHEBI:58477"/>
        <dbReference type="ChEBI" id="CHEBI:456216"/>
        <dbReference type="EC" id="2.7.3.3"/>
    </reaction>
    <physiologicalReaction direction="left-to-right" evidence="13 14 15 16">
        <dbReference type="Rhea" id="RHEA:22941"/>
    </physiologicalReaction>
    <physiologicalReaction direction="right-to-left" evidence="13 14 15 16">
        <dbReference type="Rhea" id="RHEA:22942"/>
    </physiologicalReaction>
</comment>
<comment type="catalytic activity">
    <reaction evidence="7">
        <text>dTDP + ATP = dTTP + ADP</text>
        <dbReference type="Rhea" id="RHEA:27682"/>
        <dbReference type="ChEBI" id="CHEBI:30616"/>
        <dbReference type="ChEBI" id="CHEBI:37568"/>
        <dbReference type="ChEBI" id="CHEBI:58369"/>
        <dbReference type="ChEBI" id="CHEBI:456216"/>
    </reaction>
</comment>
<comment type="biophysicochemical properties">
    <kinetics>
        <KM evidence="7">0.099 mM for ATP (at pH 8.6 and 30 degrees Celsius)</KM>
        <KM evidence="7">0.322 mM for L-arginine (at pH 8.6 and 30 degrees Celsius)</KM>
        <KM evidence="7">0.653 mM for dTDP (at pH 8.6 and 30 degrees Celsius)</KM>
        <Vmax evidence="7">1.43 umol/min/mg enzyme toward dTDP (at pH 8.6 and 30 degrees Celsius)</Vmax>
    </kinetics>
</comment>
<comment type="subunit">
    <text evidence="5">Monomer.</text>
</comment>
<comment type="tissue specificity">
    <text evidence="4 5 6 7">Muscle (at protein level).</text>
</comment>
<comment type="allergen">
    <text evidence="4">Causes an allergic reaction in human. Binds to IgE in 100% of the 5 shrimp-allergic patients tested.</text>
</comment>
<comment type="similarity">
    <text evidence="2 3 12">Belongs to the ATP:guanido phosphotransferase family.</text>
</comment>
<dbReference type="EC" id="2.7.3.3" evidence="4 5 6 7"/>
<dbReference type="EMBL" id="DQ975203">
    <property type="protein sequence ID" value="ABI98020.1"/>
    <property type="molecule type" value="mRNA"/>
</dbReference>
<dbReference type="PDB" id="4AM1">
    <property type="method" value="X-ray"/>
    <property type="resolution" value="1.25 A"/>
    <property type="chains" value="A=2-356"/>
</dbReference>
<dbReference type="PDB" id="4BG4">
    <property type="method" value="X-ray"/>
    <property type="resolution" value="1.60 A"/>
    <property type="chains" value="A/B=1-356"/>
</dbReference>
<dbReference type="PDB" id="4BHL">
    <property type="method" value="X-ray"/>
    <property type="resolution" value="1.90 A"/>
    <property type="chains" value="A=1-356"/>
</dbReference>
<dbReference type="PDBsum" id="4AM1"/>
<dbReference type="PDBsum" id="4BG4"/>
<dbReference type="PDBsum" id="4BHL"/>
<dbReference type="SMR" id="Q004B5"/>
<dbReference type="Allergome" id="3544">
    <property type="allergen name" value="Lit v 2"/>
</dbReference>
<dbReference type="Allergome" id="3616">
    <property type="allergen name" value="Lit v 2.0101"/>
</dbReference>
<dbReference type="OrthoDB" id="430219at2759"/>
<dbReference type="BRENDA" id="2.7.3.3">
    <property type="organism ID" value="4594"/>
</dbReference>
<dbReference type="EvolutionaryTrace" id="Q004B5"/>
<dbReference type="GO" id="GO:0005615">
    <property type="term" value="C:extracellular space"/>
    <property type="evidence" value="ECO:0007669"/>
    <property type="project" value="TreeGrafter"/>
</dbReference>
<dbReference type="GO" id="GO:0034618">
    <property type="term" value="F:arginine binding"/>
    <property type="evidence" value="ECO:0000314"/>
    <property type="project" value="UniProtKB"/>
</dbReference>
<dbReference type="GO" id="GO:0004054">
    <property type="term" value="F:arginine kinase activity"/>
    <property type="evidence" value="ECO:0000314"/>
    <property type="project" value="UniProtKB"/>
</dbReference>
<dbReference type="GO" id="GO:0005524">
    <property type="term" value="F:ATP binding"/>
    <property type="evidence" value="ECO:0000314"/>
    <property type="project" value="UniProtKB"/>
</dbReference>
<dbReference type="GO" id="GO:0004111">
    <property type="term" value="F:creatine kinase activity"/>
    <property type="evidence" value="ECO:0007669"/>
    <property type="project" value="InterPro"/>
</dbReference>
<dbReference type="GO" id="GO:0046072">
    <property type="term" value="P:dTDP metabolic process"/>
    <property type="evidence" value="ECO:0000314"/>
    <property type="project" value="UniProtKB"/>
</dbReference>
<dbReference type="GO" id="GO:0046314">
    <property type="term" value="P:phosphocreatine biosynthetic process"/>
    <property type="evidence" value="ECO:0007669"/>
    <property type="project" value="InterPro"/>
</dbReference>
<dbReference type="CDD" id="cd07932">
    <property type="entry name" value="arginine_kinase_like"/>
    <property type="match status" value="1"/>
</dbReference>
<dbReference type="FunFam" id="3.30.590.10:FF:000006">
    <property type="entry name" value="Arginine kinase 1"/>
    <property type="match status" value="1"/>
</dbReference>
<dbReference type="FunFam" id="1.10.135.10:FF:000003">
    <property type="entry name" value="Three-domain arginine kinase"/>
    <property type="match status" value="1"/>
</dbReference>
<dbReference type="Gene3D" id="1.10.135.10">
    <property type="entry name" value="ATP:guanido phosphotransferase, N-terminal domain"/>
    <property type="match status" value="1"/>
</dbReference>
<dbReference type="Gene3D" id="3.30.590.10">
    <property type="entry name" value="Glutamine synthetase/guanido kinase, catalytic domain"/>
    <property type="match status" value="1"/>
</dbReference>
<dbReference type="InterPro" id="IPR000749">
    <property type="entry name" value="ATP-guanido_PTrfase"/>
</dbReference>
<dbReference type="InterPro" id="IPR022415">
    <property type="entry name" value="ATP-guanido_PTrfase_AS"/>
</dbReference>
<dbReference type="InterPro" id="IPR022414">
    <property type="entry name" value="ATP-guanido_PTrfase_cat"/>
</dbReference>
<dbReference type="InterPro" id="IPR022413">
    <property type="entry name" value="ATP-guanido_PTrfase_N"/>
</dbReference>
<dbReference type="InterPro" id="IPR036802">
    <property type="entry name" value="ATP-guanido_PTrfase_N_sf"/>
</dbReference>
<dbReference type="InterPro" id="IPR014746">
    <property type="entry name" value="Gln_synth/guanido_kin_cat_dom"/>
</dbReference>
<dbReference type="PANTHER" id="PTHR11547:SF38">
    <property type="entry name" value="ARGININE KINASE 1-RELATED"/>
    <property type="match status" value="1"/>
</dbReference>
<dbReference type="PANTHER" id="PTHR11547">
    <property type="entry name" value="ARGININE OR CREATINE KINASE"/>
    <property type="match status" value="1"/>
</dbReference>
<dbReference type="Pfam" id="PF00217">
    <property type="entry name" value="ATP-gua_Ptrans"/>
    <property type="match status" value="1"/>
</dbReference>
<dbReference type="Pfam" id="PF02807">
    <property type="entry name" value="ATP-gua_PtransN"/>
    <property type="match status" value="1"/>
</dbReference>
<dbReference type="SUPFAM" id="SSF55931">
    <property type="entry name" value="Glutamine synthetase/guanido kinase"/>
    <property type="match status" value="1"/>
</dbReference>
<dbReference type="SUPFAM" id="SSF48034">
    <property type="entry name" value="Guanido kinase N-terminal domain"/>
    <property type="match status" value="1"/>
</dbReference>
<dbReference type="PROSITE" id="PS00112">
    <property type="entry name" value="PHOSPHAGEN_KINASE"/>
    <property type="match status" value="1"/>
</dbReference>
<dbReference type="PROSITE" id="PS51510">
    <property type="entry name" value="PHOSPHAGEN_KINASE_C"/>
    <property type="match status" value="1"/>
</dbReference>
<dbReference type="PROSITE" id="PS51509">
    <property type="entry name" value="PHOSPHAGEN_KINASE_N"/>
    <property type="match status" value="1"/>
</dbReference>
<name>KARG0_PENVA</name>
<keyword id="KW-0002">3D-structure</keyword>
<keyword id="KW-0020">Allergen</keyword>
<keyword id="KW-0067">ATP-binding</keyword>
<keyword id="KW-0903">Direct protein sequencing</keyword>
<keyword id="KW-0418">Kinase</keyword>
<keyword id="KW-0547">Nucleotide-binding</keyword>
<keyword id="KW-0808">Transferase</keyword>
<accession>Q004B5</accession>